<sequence>MTQQDPSTKEPKFIKNGIYRKDSVPVREKKPEWLKVTIPTGQVFTEVRKIVKEHRLHTVCEEAMCPNIGECWSRGTATFMLMGHICTRACRFCAVDTGNPMGKLDLDEPRSVADSVRLMDLKYVVLTSVDRDDLPDGGAYHFAKTVKAIKEVNPQTRVEALTPDFGGNTACVDLVLDSGVDTYAQNLETVRRLTHPVRDIRASYDRTLSVLAHAKQARPDVITKTSLMLGLGETREEIREAMADCRAAGVDVLTFGQYLRPTMHHLPVERYISPAEFDEIREEGMQLGFLEVVSGPLVRSSYKAEQIVMDRPGNLPEHLSHLDGGSELTLI</sequence>
<evidence type="ECO:0000255" key="1">
    <source>
        <dbReference type="HAMAP-Rule" id="MF_00206"/>
    </source>
</evidence>
<evidence type="ECO:0000255" key="2">
    <source>
        <dbReference type="PROSITE-ProRule" id="PRU01266"/>
    </source>
</evidence>
<name>LIPA_DEIRA</name>
<comment type="function">
    <text evidence="1">Catalyzes the radical-mediated insertion of two sulfur atoms into the C-6 and C-8 positions of the octanoyl moiety bound to the lipoyl domains of lipoate-dependent enzymes, thereby converting the octanoylated domains into lipoylated derivatives.</text>
</comment>
<comment type="catalytic activity">
    <reaction evidence="1">
        <text>[[Fe-S] cluster scaffold protein carrying a second [4Fe-4S](2+) cluster] + N(6)-octanoyl-L-lysyl-[protein] + 2 oxidized [2Fe-2S]-[ferredoxin] + 2 S-adenosyl-L-methionine + 4 H(+) = [[Fe-S] cluster scaffold protein] + N(6)-[(R)-dihydrolipoyl]-L-lysyl-[protein] + 4 Fe(3+) + 2 hydrogen sulfide + 2 5'-deoxyadenosine + 2 L-methionine + 2 reduced [2Fe-2S]-[ferredoxin]</text>
        <dbReference type="Rhea" id="RHEA:16585"/>
        <dbReference type="Rhea" id="RHEA-COMP:9928"/>
        <dbReference type="Rhea" id="RHEA-COMP:10000"/>
        <dbReference type="Rhea" id="RHEA-COMP:10001"/>
        <dbReference type="Rhea" id="RHEA-COMP:10475"/>
        <dbReference type="Rhea" id="RHEA-COMP:14568"/>
        <dbReference type="Rhea" id="RHEA-COMP:14569"/>
        <dbReference type="ChEBI" id="CHEBI:15378"/>
        <dbReference type="ChEBI" id="CHEBI:17319"/>
        <dbReference type="ChEBI" id="CHEBI:29034"/>
        <dbReference type="ChEBI" id="CHEBI:29919"/>
        <dbReference type="ChEBI" id="CHEBI:33722"/>
        <dbReference type="ChEBI" id="CHEBI:33737"/>
        <dbReference type="ChEBI" id="CHEBI:33738"/>
        <dbReference type="ChEBI" id="CHEBI:57844"/>
        <dbReference type="ChEBI" id="CHEBI:59789"/>
        <dbReference type="ChEBI" id="CHEBI:78809"/>
        <dbReference type="ChEBI" id="CHEBI:83100"/>
        <dbReference type="EC" id="2.8.1.8"/>
    </reaction>
</comment>
<comment type="cofactor">
    <cofactor evidence="1">
        <name>[4Fe-4S] cluster</name>
        <dbReference type="ChEBI" id="CHEBI:49883"/>
    </cofactor>
    <text evidence="1">Binds 2 [4Fe-4S] clusters per subunit. One cluster is coordinated with 3 cysteines and an exchangeable S-adenosyl-L-methionine.</text>
</comment>
<comment type="pathway">
    <text evidence="1">Protein modification; protein lipoylation via endogenous pathway; protein N(6)-(lipoyl)lysine from octanoyl-[acyl-carrier-protein]: step 2/2.</text>
</comment>
<comment type="subcellular location">
    <subcellularLocation>
        <location evidence="1">Cytoplasm</location>
    </subcellularLocation>
</comment>
<comment type="similarity">
    <text evidence="1">Belongs to the radical SAM superfamily. Lipoyl synthase family.</text>
</comment>
<reference key="1">
    <citation type="journal article" date="1999" name="Science">
        <title>Genome sequence of the radioresistant bacterium Deinococcus radiodurans R1.</title>
        <authorList>
            <person name="White O."/>
            <person name="Eisen J.A."/>
            <person name="Heidelberg J.F."/>
            <person name="Hickey E.K."/>
            <person name="Peterson J.D."/>
            <person name="Dodson R.J."/>
            <person name="Haft D.H."/>
            <person name="Gwinn M.L."/>
            <person name="Nelson W.C."/>
            <person name="Richardson D.L."/>
            <person name="Moffat K.S."/>
            <person name="Qin H."/>
            <person name="Jiang L."/>
            <person name="Pamphile W."/>
            <person name="Crosby M."/>
            <person name="Shen M."/>
            <person name="Vamathevan J.J."/>
            <person name="Lam P."/>
            <person name="McDonald L.A."/>
            <person name="Utterback T.R."/>
            <person name="Zalewski C."/>
            <person name="Makarova K.S."/>
            <person name="Aravind L."/>
            <person name="Daly M.J."/>
            <person name="Minton K.W."/>
            <person name="Fleischmann R.D."/>
            <person name="Ketchum K.A."/>
            <person name="Nelson K.E."/>
            <person name="Salzberg S.L."/>
            <person name="Smith H.O."/>
            <person name="Venter J.C."/>
            <person name="Fraser C.M."/>
        </authorList>
    </citation>
    <scope>NUCLEOTIDE SEQUENCE [LARGE SCALE GENOMIC DNA]</scope>
    <source>
        <strain>ATCC 13939 / DSM 20539 / JCM 16871 / CCUG 27074 / LMG 4051 / NBRC 15346 / NCIMB 9279 / VKM B-1422 / R1</strain>
    </source>
</reference>
<accession>Q9RWA4</accession>
<gene>
    <name evidence="1" type="primary">lipA</name>
    <name type="ordered locus">DR_0765</name>
</gene>
<keyword id="KW-0004">4Fe-4S</keyword>
<keyword id="KW-0963">Cytoplasm</keyword>
<keyword id="KW-0408">Iron</keyword>
<keyword id="KW-0411">Iron-sulfur</keyword>
<keyword id="KW-0479">Metal-binding</keyword>
<keyword id="KW-1185">Reference proteome</keyword>
<keyword id="KW-0949">S-adenosyl-L-methionine</keyword>
<keyword id="KW-0808">Transferase</keyword>
<proteinExistence type="inferred from homology"/>
<protein>
    <recommendedName>
        <fullName evidence="1">Lipoyl synthase</fullName>
        <ecNumber evidence="1">2.8.1.8</ecNumber>
    </recommendedName>
    <alternativeName>
        <fullName evidence="1">Lip-syn</fullName>
        <shortName evidence="1">LS</shortName>
    </alternativeName>
    <alternativeName>
        <fullName evidence="1">Lipoate synthase</fullName>
    </alternativeName>
    <alternativeName>
        <fullName evidence="1">Lipoic acid synthase</fullName>
    </alternativeName>
    <alternativeName>
        <fullName evidence="1">Sulfur insertion protein LipA</fullName>
    </alternativeName>
</protein>
<organism>
    <name type="scientific">Deinococcus radiodurans (strain ATCC 13939 / DSM 20539 / JCM 16871 / CCUG 27074 / LMG 4051 / NBRC 15346 / NCIMB 9279 / VKM B-1422 / R1)</name>
    <dbReference type="NCBI Taxonomy" id="243230"/>
    <lineage>
        <taxon>Bacteria</taxon>
        <taxon>Thermotogati</taxon>
        <taxon>Deinococcota</taxon>
        <taxon>Deinococci</taxon>
        <taxon>Deinococcales</taxon>
        <taxon>Deinococcaceae</taxon>
        <taxon>Deinococcus</taxon>
    </lineage>
</organism>
<feature type="chain" id="PRO_0000102312" description="Lipoyl synthase">
    <location>
        <begin position="1"/>
        <end position="331"/>
    </location>
</feature>
<feature type="domain" description="Radical SAM core" evidence="2">
    <location>
        <begin position="72"/>
        <end position="290"/>
    </location>
</feature>
<feature type="binding site" evidence="1">
    <location>
        <position position="60"/>
    </location>
    <ligand>
        <name>[4Fe-4S] cluster</name>
        <dbReference type="ChEBI" id="CHEBI:49883"/>
        <label>1</label>
    </ligand>
</feature>
<feature type="binding site" evidence="1">
    <location>
        <position position="65"/>
    </location>
    <ligand>
        <name>[4Fe-4S] cluster</name>
        <dbReference type="ChEBI" id="CHEBI:49883"/>
        <label>1</label>
    </ligand>
</feature>
<feature type="binding site" evidence="1">
    <location>
        <position position="71"/>
    </location>
    <ligand>
        <name>[4Fe-4S] cluster</name>
        <dbReference type="ChEBI" id="CHEBI:49883"/>
        <label>1</label>
    </ligand>
</feature>
<feature type="binding site" evidence="1">
    <location>
        <position position="86"/>
    </location>
    <ligand>
        <name>[4Fe-4S] cluster</name>
        <dbReference type="ChEBI" id="CHEBI:49883"/>
        <label>2</label>
        <note>4Fe-4S-S-AdoMet</note>
    </ligand>
</feature>
<feature type="binding site" evidence="1">
    <location>
        <position position="90"/>
    </location>
    <ligand>
        <name>[4Fe-4S] cluster</name>
        <dbReference type="ChEBI" id="CHEBI:49883"/>
        <label>2</label>
        <note>4Fe-4S-S-AdoMet</note>
    </ligand>
</feature>
<feature type="binding site" evidence="1">
    <location>
        <position position="93"/>
    </location>
    <ligand>
        <name>[4Fe-4S] cluster</name>
        <dbReference type="ChEBI" id="CHEBI:49883"/>
        <label>2</label>
        <note>4Fe-4S-S-AdoMet</note>
    </ligand>
</feature>
<feature type="binding site" evidence="1">
    <location>
        <position position="301"/>
    </location>
    <ligand>
        <name>[4Fe-4S] cluster</name>
        <dbReference type="ChEBI" id="CHEBI:49883"/>
        <label>1</label>
    </ligand>
</feature>
<dbReference type="EC" id="2.8.1.8" evidence="1"/>
<dbReference type="EMBL" id="AE000513">
    <property type="protein sequence ID" value="AAF10341.1"/>
    <property type="molecule type" value="Genomic_DNA"/>
</dbReference>
<dbReference type="PIR" id="A75480">
    <property type="entry name" value="A75480"/>
</dbReference>
<dbReference type="RefSeq" id="NP_294489.1">
    <property type="nucleotide sequence ID" value="NC_001263.1"/>
</dbReference>
<dbReference type="RefSeq" id="WP_010887411.1">
    <property type="nucleotide sequence ID" value="NC_001263.1"/>
</dbReference>
<dbReference type="SMR" id="Q9RWA4"/>
<dbReference type="FunCoup" id="Q9RWA4">
    <property type="interactions" value="474"/>
</dbReference>
<dbReference type="STRING" id="243230.DR_0765"/>
<dbReference type="PaxDb" id="243230-DR_0765"/>
<dbReference type="EnsemblBacteria" id="AAF10341">
    <property type="protein sequence ID" value="AAF10341"/>
    <property type="gene ID" value="DR_0765"/>
</dbReference>
<dbReference type="GeneID" id="69517010"/>
<dbReference type="KEGG" id="dra:DR_0765"/>
<dbReference type="PATRIC" id="fig|243230.17.peg.945"/>
<dbReference type="eggNOG" id="COG0320">
    <property type="taxonomic scope" value="Bacteria"/>
</dbReference>
<dbReference type="HOGENOM" id="CLU_033144_2_0_0"/>
<dbReference type="InParanoid" id="Q9RWA4"/>
<dbReference type="OrthoDB" id="9787898at2"/>
<dbReference type="UniPathway" id="UPA00538">
    <property type="reaction ID" value="UER00593"/>
</dbReference>
<dbReference type="Proteomes" id="UP000002524">
    <property type="component" value="Chromosome 1"/>
</dbReference>
<dbReference type="GO" id="GO:0005737">
    <property type="term" value="C:cytoplasm"/>
    <property type="evidence" value="ECO:0007669"/>
    <property type="project" value="UniProtKB-SubCell"/>
</dbReference>
<dbReference type="GO" id="GO:0051539">
    <property type="term" value="F:4 iron, 4 sulfur cluster binding"/>
    <property type="evidence" value="ECO:0007669"/>
    <property type="project" value="UniProtKB-UniRule"/>
</dbReference>
<dbReference type="GO" id="GO:0016992">
    <property type="term" value="F:lipoate synthase activity"/>
    <property type="evidence" value="ECO:0007669"/>
    <property type="project" value="UniProtKB-UniRule"/>
</dbReference>
<dbReference type="GO" id="GO:0046872">
    <property type="term" value="F:metal ion binding"/>
    <property type="evidence" value="ECO:0007669"/>
    <property type="project" value="UniProtKB-KW"/>
</dbReference>
<dbReference type="CDD" id="cd01335">
    <property type="entry name" value="Radical_SAM"/>
    <property type="match status" value="1"/>
</dbReference>
<dbReference type="FunFam" id="3.20.20.70:FF:000265">
    <property type="entry name" value="Lipoyl synthase"/>
    <property type="match status" value="1"/>
</dbReference>
<dbReference type="Gene3D" id="3.20.20.70">
    <property type="entry name" value="Aldolase class I"/>
    <property type="match status" value="1"/>
</dbReference>
<dbReference type="HAMAP" id="MF_00206">
    <property type="entry name" value="Lipoyl_synth"/>
    <property type="match status" value="1"/>
</dbReference>
<dbReference type="InterPro" id="IPR013785">
    <property type="entry name" value="Aldolase_TIM"/>
</dbReference>
<dbReference type="InterPro" id="IPR006638">
    <property type="entry name" value="Elp3/MiaA/NifB-like_rSAM"/>
</dbReference>
<dbReference type="InterPro" id="IPR031691">
    <property type="entry name" value="LIAS_N"/>
</dbReference>
<dbReference type="InterPro" id="IPR003698">
    <property type="entry name" value="Lipoyl_synth"/>
</dbReference>
<dbReference type="InterPro" id="IPR007197">
    <property type="entry name" value="rSAM"/>
</dbReference>
<dbReference type="NCBIfam" id="TIGR00510">
    <property type="entry name" value="lipA"/>
    <property type="match status" value="1"/>
</dbReference>
<dbReference type="NCBIfam" id="NF004019">
    <property type="entry name" value="PRK05481.1"/>
    <property type="match status" value="1"/>
</dbReference>
<dbReference type="NCBIfam" id="NF009544">
    <property type="entry name" value="PRK12928.1"/>
    <property type="match status" value="1"/>
</dbReference>
<dbReference type="PANTHER" id="PTHR10949">
    <property type="entry name" value="LIPOYL SYNTHASE"/>
    <property type="match status" value="1"/>
</dbReference>
<dbReference type="PANTHER" id="PTHR10949:SF0">
    <property type="entry name" value="LIPOYL SYNTHASE, MITOCHONDRIAL"/>
    <property type="match status" value="1"/>
</dbReference>
<dbReference type="Pfam" id="PF16881">
    <property type="entry name" value="LIAS_N"/>
    <property type="match status" value="1"/>
</dbReference>
<dbReference type="Pfam" id="PF04055">
    <property type="entry name" value="Radical_SAM"/>
    <property type="match status" value="1"/>
</dbReference>
<dbReference type="PIRSF" id="PIRSF005963">
    <property type="entry name" value="Lipoyl_synth"/>
    <property type="match status" value="1"/>
</dbReference>
<dbReference type="SFLD" id="SFLDF00271">
    <property type="entry name" value="lipoyl_synthase"/>
    <property type="match status" value="1"/>
</dbReference>
<dbReference type="SFLD" id="SFLDG01058">
    <property type="entry name" value="lipoyl_synthase_like"/>
    <property type="match status" value="1"/>
</dbReference>
<dbReference type="SMART" id="SM00729">
    <property type="entry name" value="Elp3"/>
    <property type="match status" value="1"/>
</dbReference>
<dbReference type="SUPFAM" id="SSF102114">
    <property type="entry name" value="Radical SAM enzymes"/>
    <property type="match status" value="1"/>
</dbReference>
<dbReference type="PROSITE" id="PS51918">
    <property type="entry name" value="RADICAL_SAM"/>
    <property type="match status" value="1"/>
</dbReference>